<gene>
    <name type="primary">abfB</name>
    <name type="ORF">ACLA_066470</name>
</gene>
<proteinExistence type="inferred from homology"/>
<comment type="function">
    <text evidence="1">Alpha-L-arabinofuranosidase involved in the degradation of arabinoxylan, a major component of plant hemicellulose. Able to hydrolyze 1,5-, 1,3- and 1,2-alpha-linkages not only in L-arabinofuranosyl oligosaccharides, but also in polysaccharides containing terminal non-reducing L-arabinofuranoses in side chains, like L-arabinan, arabinogalactan and arabinoxylan (By similarity).</text>
</comment>
<comment type="catalytic activity">
    <reaction>
        <text>Hydrolysis of terminal non-reducing alpha-L-arabinofuranoside residues in alpha-L-arabinosides.</text>
        <dbReference type="EC" id="3.2.1.55"/>
    </reaction>
</comment>
<comment type="pathway">
    <text>Glycan metabolism; L-arabinan degradation.</text>
</comment>
<comment type="subcellular location">
    <subcellularLocation>
        <location evidence="1">Secreted</location>
    </subcellularLocation>
</comment>
<comment type="domain">
    <text evidence="1">Organized into two domains: an N-terminal catalytic domain and a C-terminal arabinose-binding domain (ABD).</text>
</comment>
<comment type="similarity">
    <text evidence="4">Belongs to the glycosyl hydrolase 54 family.</text>
</comment>
<dbReference type="EC" id="3.2.1.55"/>
<dbReference type="EMBL" id="DS027053">
    <property type="protein sequence ID" value="EAW11011.1"/>
    <property type="molecule type" value="Genomic_DNA"/>
</dbReference>
<dbReference type="RefSeq" id="XP_001272437.1">
    <property type="nucleotide sequence ID" value="XM_001272436.1"/>
</dbReference>
<dbReference type="SMR" id="A1CGD1"/>
<dbReference type="STRING" id="344612.A1CGD1"/>
<dbReference type="GlyCosmos" id="A1CGD1">
    <property type="glycosylation" value="1 site, No reported glycans"/>
</dbReference>
<dbReference type="EnsemblFungi" id="EAW11011">
    <property type="protein sequence ID" value="EAW11011"/>
    <property type="gene ID" value="ACLA_066470"/>
</dbReference>
<dbReference type="GeneID" id="4704554"/>
<dbReference type="KEGG" id="act:ACLA_066470"/>
<dbReference type="VEuPathDB" id="FungiDB:ACLA_066470"/>
<dbReference type="eggNOG" id="ENOG502QS3Q">
    <property type="taxonomic scope" value="Eukaryota"/>
</dbReference>
<dbReference type="HOGENOM" id="CLU_029332_3_0_1"/>
<dbReference type="OMA" id="WNYPTRY"/>
<dbReference type="OrthoDB" id="157622at2759"/>
<dbReference type="UniPathway" id="UPA00667"/>
<dbReference type="Proteomes" id="UP000006701">
    <property type="component" value="Unassembled WGS sequence"/>
</dbReference>
<dbReference type="GO" id="GO:0005576">
    <property type="term" value="C:extracellular region"/>
    <property type="evidence" value="ECO:0000250"/>
    <property type="project" value="UniProtKB"/>
</dbReference>
<dbReference type="GO" id="GO:0046556">
    <property type="term" value="F:alpha-L-arabinofuranosidase activity"/>
    <property type="evidence" value="ECO:0000250"/>
    <property type="project" value="UniProtKB"/>
</dbReference>
<dbReference type="GO" id="GO:0031222">
    <property type="term" value="P:arabinan catabolic process"/>
    <property type="evidence" value="ECO:0007669"/>
    <property type="project" value="UniProtKB-UniPathway"/>
</dbReference>
<dbReference type="GO" id="GO:0019566">
    <property type="term" value="P:arabinose metabolic process"/>
    <property type="evidence" value="ECO:0000250"/>
    <property type="project" value="UniProtKB"/>
</dbReference>
<dbReference type="GO" id="GO:0046373">
    <property type="term" value="P:L-arabinose metabolic process"/>
    <property type="evidence" value="ECO:0007669"/>
    <property type="project" value="InterPro"/>
</dbReference>
<dbReference type="GO" id="GO:0045490">
    <property type="term" value="P:pectin catabolic process"/>
    <property type="evidence" value="ECO:0007669"/>
    <property type="project" value="TreeGrafter"/>
</dbReference>
<dbReference type="GO" id="GO:0045493">
    <property type="term" value="P:xylan catabolic process"/>
    <property type="evidence" value="ECO:0007669"/>
    <property type="project" value="UniProtKB-KW"/>
</dbReference>
<dbReference type="CDD" id="cd23399">
    <property type="entry name" value="beta-trefoil_ABD_ABFB"/>
    <property type="match status" value="1"/>
</dbReference>
<dbReference type="FunFam" id="2.60.120.200:FF:000131">
    <property type="entry name" value="Probable alpha-L-arabinofuranosidase B"/>
    <property type="match status" value="1"/>
</dbReference>
<dbReference type="FunFam" id="2.80.10.50:FF:000059">
    <property type="entry name" value="Probable alpha-L-arabinofuranosidase B"/>
    <property type="match status" value="1"/>
</dbReference>
<dbReference type="Gene3D" id="2.60.120.200">
    <property type="match status" value="1"/>
</dbReference>
<dbReference type="Gene3D" id="2.80.10.50">
    <property type="match status" value="1"/>
</dbReference>
<dbReference type="InterPro" id="IPR015289">
    <property type="entry name" value="A-L-arabinofuranosidase_B_cat"/>
</dbReference>
<dbReference type="InterPro" id="IPR038964">
    <property type="entry name" value="ABFB"/>
</dbReference>
<dbReference type="InterPro" id="IPR007934">
    <property type="entry name" value="AbfB_ABD"/>
</dbReference>
<dbReference type="InterPro" id="IPR036195">
    <property type="entry name" value="AbfB_ABD_sf"/>
</dbReference>
<dbReference type="InterPro" id="IPR013320">
    <property type="entry name" value="ConA-like_dom_sf"/>
</dbReference>
<dbReference type="PANTHER" id="PTHR39447">
    <property type="entry name" value="ALPHA-L-ARABINOFURANOSIDASE B"/>
    <property type="match status" value="1"/>
</dbReference>
<dbReference type="PANTHER" id="PTHR39447:SF2">
    <property type="entry name" value="ALPHA-L-ARABINOFURANOSIDASE B"/>
    <property type="match status" value="1"/>
</dbReference>
<dbReference type="Pfam" id="PF05270">
    <property type="entry name" value="AbfB"/>
    <property type="match status" value="1"/>
</dbReference>
<dbReference type="Pfam" id="PF09206">
    <property type="entry name" value="ArabFuran-catal"/>
    <property type="match status" value="1"/>
</dbReference>
<dbReference type="SUPFAM" id="SSF110221">
    <property type="entry name" value="AbfB domain"/>
    <property type="match status" value="1"/>
</dbReference>
<dbReference type="SUPFAM" id="SSF49899">
    <property type="entry name" value="Concanavalin A-like lectins/glucanases"/>
    <property type="match status" value="1"/>
</dbReference>
<protein>
    <recommendedName>
        <fullName>Probable alpha-L-arabinofuranosidase B</fullName>
        <shortName>ABF B</shortName>
        <shortName>Arabinosidase B</shortName>
        <ecNumber>3.2.1.55</ecNumber>
    </recommendedName>
</protein>
<organism>
    <name type="scientific">Aspergillus clavatus (strain ATCC 1007 / CBS 513.65 / DSM 816 / NCTC 3887 / NRRL 1 / QM 1276 / 107)</name>
    <dbReference type="NCBI Taxonomy" id="344612"/>
    <lineage>
        <taxon>Eukaryota</taxon>
        <taxon>Fungi</taxon>
        <taxon>Dikarya</taxon>
        <taxon>Ascomycota</taxon>
        <taxon>Pezizomycotina</taxon>
        <taxon>Eurotiomycetes</taxon>
        <taxon>Eurotiomycetidae</taxon>
        <taxon>Eurotiales</taxon>
        <taxon>Aspergillaceae</taxon>
        <taxon>Aspergillus</taxon>
        <taxon>Aspergillus subgen. Fumigati</taxon>
    </lineage>
</organism>
<evidence type="ECO:0000250" key="1"/>
<evidence type="ECO:0000250" key="2">
    <source>
        <dbReference type="UniProtKB" id="Q8NK89"/>
    </source>
</evidence>
<evidence type="ECO:0000255" key="3"/>
<evidence type="ECO:0000305" key="4"/>
<name>ABFB_ASPCL</name>
<keyword id="KW-0119">Carbohydrate metabolism</keyword>
<keyword id="KW-1015">Disulfide bond</keyword>
<keyword id="KW-0325">Glycoprotein</keyword>
<keyword id="KW-0326">Glycosidase</keyword>
<keyword id="KW-0378">Hydrolase</keyword>
<keyword id="KW-0624">Polysaccharide degradation</keyword>
<keyword id="KW-1185">Reference proteome</keyword>
<keyword id="KW-0964">Secreted</keyword>
<keyword id="KW-0732">Signal</keyword>
<keyword id="KW-0858">Xylan degradation</keyword>
<reference key="1">
    <citation type="journal article" date="2008" name="PLoS Genet.">
        <title>Genomic islands in the pathogenic filamentous fungus Aspergillus fumigatus.</title>
        <authorList>
            <person name="Fedorova N.D."/>
            <person name="Khaldi N."/>
            <person name="Joardar V.S."/>
            <person name="Maiti R."/>
            <person name="Amedeo P."/>
            <person name="Anderson M.J."/>
            <person name="Crabtree J."/>
            <person name="Silva J.C."/>
            <person name="Badger J.H."/>
            <person name="Albarraq A."/>
            <person name="Angiuoli S."/>
            <person name="Bussey H."/>
            <person name="Bowyer P."/>
            <person name="Cotty P.J."/>
            <person name="Dyer P.S."/>
            <person name="Egan A."/>
            <person name="Galens K."/>
            <person name="Fraser-Liggett C.M."/>
            <person name="Haas B.J."/>
            <person name="Inman J.M."/>
            <person name="Kent R."/>
            <person name="Lemieux S."/>
            <person name="Malavazi I."/>
            <person name="Orvis J."/>
            <person name="Roemer T."/>
            <person name="Ronning C.M."/>
            <person name="Sundaram J.P."/>
            <person name="Sutton G."/>
            <person name="Turner G."/>
            <person name="Venter J.C."/>
            <person name="White O.R."/>
            <person name="Whitty B.R."/>
            <person name="Youngman P."/>
            <person name="Wolfe K.H."/>
            <person name="Goldman G.H."/>
            <person name="Wortman J.R."/>
            <person name="Jiang B."/>
            <person name="Denning D.W."/>
            <person name="Nierman W.C."/>
        </authorList>
    </citation>
    <scope>NUCLEOTIDE SEQUENCE [LARGE SCALE GENOMIC DNA]</scope>
    <source>
        <strain>ATCC 1007 / CBS 513.65 / DSM 816 / NCTC 3887 / NRRL 1 / QM 1276 / 107</strain>
    </source>
</reference>
<accession>A1CGD1</accession>
<sequence>MLSQPSRERAFVLALGLVVSSSLAAAAPCDIYSSGGTPCVAAHSTTRALYSAYSGPLYQVKRGSDGATTNIAPRSAGGVANAAAQDTFCASMTCLITVIYDQSGRGNHLTQAPPGGFKGPEANGYDNLASAIGAPVTLNGQKAYGVFISPGTGYRNNAASGTAIGDAAEGMYAVLDGTHYNGGCCFDYGNAETSSLDTGNGHMEAIYFGTNTVWGSGSGSGPWIMADLENGLFSGSSPANNAGDPSVSYRFLTAAIKGGPNRWAIRGANAASGSLATYYSGARPNASGYNPMSKEGAIILGIGGDNSNGAQGTFYEGVMTSGYPSDATENAVQADIVAANYAVTSLTSGPALTVGSAISLRATTSCCTTRYLAHTGSTINTQVVSSASATTLKQQATWTVRTGLANSGCFSFESKDTPGSFIRHSNFALVLNGNDGTKQFKEDATFCPQAGLNGQGSSIRSWSFPTRYFRHYSNVLYAASNGGVHTFDAAGSFNDDVSWVISSGFA</sequence>
<feature type="signal peptide" evidence="3">
    <location>
        <begin position="1"/>
        <end position="26"/>
    </location>
</feature>
<feature type="chain" id="PRO_0000394603" description="Probable alpha-L-arabinofuranosidase B">
    <location>
        <begin position="27"/>
        <end position="506"/>
    </location>
</feature>
<feature type="region of interest" description="Catalytic" evidence="1">
    <location>
        <begin position="27"/>
        <end position="343"/>
    </location>
</feature>
<feature type="region of interest" description="ABD" evidence="1">
    <location>
        <begin position="344"/>
        <end position="506"/>
    </location>
</feature>
<feature type="active site" description="Nucleophile" evidence="1">
    <location>
        <position position="229"/>
    </location>
</feature>
<feature type="active site" description="Proton donor" evidence="1">
    <location>
        <position position="305"/>
    </location>
</feature>
<feature type="binding site" evidence="2">
    <location>
        <position position="227"/>
    </location>
    <ligand>
        <name>substrate</name>
    </ligand>
</feature>
<feature type="binding site" evidence="2">
    <location>
        <position position="230"/>
    </location>
    <ligand>
        <name>substrate</name>
    </ligand>
</feature>
<feature type="binding site" evidence="2">
    <location>
        <position position="304"/>
    </location>
    <ligand>
        <name>substrate</name>
    </ligand>
</feature>
<feature type="binding site" evidence="2">
    <location>
        <position position="424"/>
    </location>
    <ligand>
        <name>substrate</name>
    </ligand>
</feature>
<feature type="binding site" evidence="2">
    <location>
        <position position="426"/>
    </location>
    <ligand>
        <name>substrate</name>
    </ligand>
</feature>
<feature type="binding site" evidence="2">
    <location>
        <position position="427"/>
    </location>
    <ligand>
        <name>substrate</name>
    </ligand>
</feature>
<feature type="binding site" evidence="2">
    <location>
        <position position="443"/>
    </location>
    <ligand>
        <name>substrate</name>
    </ligand>
</feature>
<feature type="binding site" evidence="2">
    <location>
        <position position="471"/>
    </location>
    <ligand>
        <name>substrate</name>
    </ligand>
</feature>
<feature type="binding site" evidence="2">
    <location>
        <position position="476"/>
    </location>
    <ligand>
        <name>substrate</name>
    </ligand>
</feature>
<feature type="binding site" evidence="2">
    <location>
        <position position="496"/>
    </location>
    <ligand>
        <name>substrate</name>
    </ligand>
</feature>
<feature type="site" description="Cis-peptide bond" evidence="2">
    <location>
        <begin position="184"/>
        <end position="185"/>
    </location>
</feature>
<feature type="glycosylation site" description="N-linked (GlcNAc...) asparagine" evidence="3">
    <location>
        <position position="285"/>
    </location>
</feature>
<feature type="disulfide bond" evidence="2">
    <location>
        <begin position="29"/>
        <end position="39"/>
    </location>
</feature>
<feature type="disulfide bond" evidence="2">
    <location>
        <begin position="89"/>
        <end position="94"/>
    </location>
</feature>
<feature type="disulfide bond" evidence="2">
    <location>
        <begin position="184"/>
        <end position="185"/>
    </location>
</feature>
<feature type="disulfide bond" evidence="2">
    <location>
        <begin position="409"/>
        <end position="447"/>
    </location>
</feature>